<dbReference type="EMBL" id="AE005174">
    <property type="protein sequence ID" value="AAG59019.1"/>
    <property type="status" value="ALT_INIT"/>
    <property type="molecule type" value="Genomic_DNA"/>
</dbReference>
<dbReference type="EMBL" id="BA000007">
    <property type="protein sequence ID" value="BAB38176.1"/>
    <property type="molecule type" value="Genomic_DNA"/>
</dbReference>
<dbReference type="PIR" id="A98223">
    <property type="entry name" value="A98223"/>
</dbReference>
<dbReference type="RefSeq" id="NP_312780.1">
    <property type="nucleotide sequence ID" value="NC_002695.1"/>
</dbReference>
<dbReference type="RefSeq" id="WP_000928824.1">
    <property type="nucleotide sequence ID" value="NZ_VOAI01000017.1"/>
</dbReference>
<dbReference type="STRING" id="155864.Z5344"/>
<dbReference type="GeneID" id="75174059"/>
<dbReference type="GeneID" id="915151"/>
<dbReference type="KEGG" id="ece:Z5344"/>
<dbReference type="KEGG" id="ecs:ECs_4753"/>
<dbReference type="PATRIC" id="fig|386585.9.peg.4962"/>
<dbReference type="eggNOG" id="COG1280">
    <property type="taxonomic scope" value="Bacteria"/>
</dbReference>
<dbReference type="HOGENOM" id="CLU_079569_0_1_6"/>
<dbReference type="OMA" id="MAWLHNI"/>
<dbReference type="Proteomes" id="UP000000558">
    <property type="component" value="Chromosome"/>
</dbReference>
<dbReference type="Proteomes" id="UP000002519">
    <property type="component" value="Chromosome"/>
</dbReference>
<dbReference type="GO" id="GO:0005886">
    <property type="term" value="C:plasma membrane"/>
    <property type="evidence" value="ECO:0007669"/>
    <property type="project" value="UniProtKB-SubCell"/>
</dbReference>
<dbReference type="GO" id="GO:0015171">
    <property type="term" value="F:amino acid transmembrane transporter activity"/>
    <property type="evidence" value="ECO:0007669"/>
    <property type="project" value="TreeGrafter"/>
</dbReference>
<dbReference type="InterPro" id="IPR004778">
    <property type="entry name" value="Homoserine/Threonine_efflux"/>
</dbReference>
<dbReference type="InterPro" id="IPR001123">
    <property type="entry name" value="LeuE-type"/>
</dbReference>
<dbReference type="NCBIfam" id="TIGR00949">
    <property type="entry name" value="2A76"/>
    <property type="match status" value="1"/>
</dbReference>
<dbReference type="NCBIfam" id="NF007591">
    <property type="entry name" value="PRK10229.1"/>
    <property type="match status" value="1"/>
</dbReference>
<dbReference type="PANTHER" id="PTHR30086">
    <property type="entry name" value="ARGININE EXPORTER PROTEIN ARGO"/>
    <property type="match status" value="1"/>
</dbReference>
<dbReference type="PANTHER" id="PTHR30086:SF19">
    <property type="entry name" value="THREONINE EFFLUX PROTEIN"/>
    <property type="match status" value="1"/>
</dbReference>
<dbReference type="Pfam" id="PF01810">
    <property type="entry name" value="LysE"/>
    <property type="match status" value="1"/>
</dbReference>
<dbReference type="PIRSF" id="PIRSF006324">
    <property type="entry name" value="LeuE"/>
    <property type="match status" value="1"/>
</dbReference>
<reference key="1">
    <citation type="journal article" date="2001" name="Nature">
        <title>Genome sequence of enterohaemorrhagic Escherichia coli O157:H7.</title>
        <authorList>
            <person name="Perna N.T."/>
            <person name="Plunkett G. III"/>
            <person name="Burland V."/>
            <person name="Mau B."/>
            <person name="Glasner J.D."/>
            <person name="Rose D.J."/>
            <person name="Mayhew G.F."/>
            <person name="Evans P.S."/>
            <person name="Gregor J."/>
            <person name="Kirkpatrick H.A."/>
            <person name="Posfai G."/>
            <person name="Hackett J."/>
            <person name="Klink S."/>
            <person name="Boutin A."/>
            <person name="Shao Y."/>
            <person name="Miller L."/>
            <person name="Grotbeck E.J."/>
            <person name="Davis N.W."/>
            <person name="Lim A."/>
            <person name="Dimalanta E.T."/>
            <person name="Potamousis K."/>
            <person name="Apodaca J."/>
            <person name="Anantharaman T.S."/>
            <person name="Lin J."/>
            <person name="Yen G."/>
            <person name="Schwartz D.C."/>
            <person name="Welch R.A."/>
            <person name="Blattner F.R."/>
        </authorList>
    </citation>
    <scope>NUCLEOTIDE SEQUENCE [LARGE SCALE GENOMIC DNA]</scope>
    <source>
        <strain>O157:H7 / EDL933 / ATCC 700927 / EHEC</strain>
    </source>
</reference>
<reference key="2">
    <citation type="journal article" date="2001" name="DNA Res.">
        <title>Complete genome sequence of enterohemorrhagic Escherichia coli O157:H7 and genomic comparison with a laboratory strain K-12.</title>
        <authorList>
            <person name="Hayashi T."/>
            <person name="Makino K."/>
            <person name="Ohnishi M."/>
            <person name="Kurokawa K."/>
            <person name="Ishii K."/>
            <person name="Yokoyama K."/>
            <person name="Han C.-G."/>
            <person name="Ohtsubo E."/>
            <person name="Nakayama K."/>
            <person name="Murata T."/>
            <person name="Tanaka M."/>
            <person name="Tobe T."/>
            <person name="Iida T."/>
            <person name="Takami H."/>
            <person name="Honda T."/>
            <person name="Sasakawa C."/>
            <person name="Ogasawara N."/>
            <person name="Yasunaga T."/>
            <person name="Kuhara S."/>
            <person name="Shiba T."/>
            <person name="Hattori M."/>
            <person name="Shinagawa H."/>
        </authorList>
    </citation>
    <scope>NUCLEOTIDE SEQUENCE [LARGE SCALE GENOMIC DNA]</scope>
    <source>
        <strain>O157:H7 / Sakai / RIMD 0509952 / EHEC</strain>
    </source>
</reference>
<sequence length="206" mass="22474">MLMLFLTVAMVHIVALMSPGPDFFFVSQTAVSRSRKEAMMGVLGITCGVMVWAGIALLGLHLIIEKMAWLHTLIMVGGGLYLCWMGYQMLRGALKKEAVSAPAPQVELAKSGRSFLKGLLTNLANPKAIIYFGSVFSLFVGDNVGTTARWGIFALIIVETLAWFTVVASLFALPQMRRGYQRLAKWIDGFAGALFAGFGIHLIISR</sequence>
<comment type="function">
    <text evidence="1">Conducts the efflux of threonine.</text>
</comment>
<comment type="subcellular location">
    <subcellularLocation>
        <location evidence="1">Cell inner membrane</location>
        <topology evidence="1">Multi-pass membrane protein</topology>
    </subcellularLocation>
</comment>
<comment type="similarity">
    <text evidence="3">Belongs to the Rht family.</text>
</comment>
<comment type="sequence caution" evidence="3">
    <conflict type="erroneous initiation">
        <sequence resource="EMBL-CDS" id="AAG59019"/>
    </conflict>
</comment>
<feature type="chain" id="PRO_0000094737" description="Threonine efflux protein">
    <location>
        <begin position="1"/>
        <end position="206"/>
    </location>
</feature>
<feature type="transmembrane region" description="Helical" evidence="2">
    <location>
        <begin position="1"/>
        <end position="21"/>
    </location>
</feature>
<feature type="topological domain" description="Periplasmic" evidence="2">
    <location>
        <begin position="22"/>
        <end position="43"/>
    </location>
</feature>
<feature type="transmembrane region" description="Helical" evidence="2">
    <location>
        <begin position="44"/>
        <end position="64"/>
    </location>
</feature>
<feature type="topological domain" description="Cytoplasmic" evidence="2">
    <location>
        <begin position="65"/>
        <end position="66"/>
    </location>
</feature>
<feature type="transmembrane region" description="Helical" evidence="2">
    <location>
        <begin position="67"/>
        <end position="87"/>
    </location>
</feature>
<feature type="topological domain" description="Periplasmic" evidence="2">
    <location>
        <begin position="88"/>
        <end position="149"/>
    </location>
</feature>
<feature type="transmembrane region" description="Helical" evidence="2">
    <location>
        <begin position="150"/>
        <end position="173"/>
    </location>
</feature>
<feature type="topological domain" description="Cytoplasmic" evidence="2">
    <location>
        <begin position="174"/>
        <end position="206"/>
    </location>
</feature>
<organism>
    <name type="scientific">Escherichia coli O157:H7</name>
    <dbReference type="NCBI Taxonomy" id="83334"/>
    <lineage>
        <taxon>Bacteria</taxon>
        <taxon>Pseudomonadati</taxon>
        <taxon>Pseudomonadota</taxon>
        <taxon>Gammaproteobacteria</taxon>
        <taxon>Enterobacterales</taxon>
        <taxon>Enterobacteriaceae</taxon>
        <taxon>Escherichia</taxon>
    </lineage>
</organism>
<keyword id="KW-0997">Cell inner membrane</keyword>
<keyword id="KW-1003">Cell membrane</keyword>
<keyword id="KW-0472">Membrane</keyword>
<keyword id="KW-1185">Reference proteome</keyword>
<keyword id="KW-0812">Transmembrane</keyword>
<keyword id="KW-1133">Transmembrane helix</keyword>
<keyword id="KW-0813">Transport</keyword>
<proteinExistence type="inferred from homology"/>
<gene>
    <name type="primary">rhtC</name>
    <name type="ordered locus">Z5344</name>
    <name type="ordered locus">ECs4753</name>
</gene>
<protein>
    <recommendedName>
        <fullName>Threonine efflux protein</fullName>
    </recommendedName>
</protein>
<accession>P0AG39</accession>
<accession>P27846</accession>
<name>RHTC_ECO57</name>
<evidence type="ECO:0000250" key="1"/>
<evidence type="ECO:0000255" key="2"/>
<evidence type="ECO:0000305" key="3"/>